<comment type="function">
    <text evidence="1">Catalyzes the anti-1,4-elimination of the C-3 phosphate and the C-6 proR hydrogen from 5-enolpyruvylshikimate-3-phosphate (EPSP) to yield chorismate, which is the branch point compound that serves as the starting substrate for the three terminal pathways of aromatic amino acid biosynthesis. This reaction introduces a second double bond into the aromatic ring system.</text>
</comment>
<comment type="catalytic activity">
    <reaction evidence="1">
        <text>5-O-(1-carboxyvinyl)-3-phosphoshikimate = chorismate + phosphate</text>
        <dbReference type="Rhea" id="RHEA:21020"/>
        <dbReference type="ChEBI" id="CHEBI:29748"/>
        <dbReference type="ChEBI" id="CHEBI:43474"/>
        <dbReference type="ChEBI" id="CHEBI:57701"/>
        <dbReference type="EC" id="4.2.3.5"/>
    </reaction>
</comment>
<comment type="cofactor">
    <cofactor evidence="1">
        <name>FMNH2</name>
        <dbReference type="ChEBI" id="CHEBI:57618"/>
    </cofactor>
    <text evidence="1">Reduced FMN (FMNH(2)).</text>
</comment>
<comment type="pathway">
    <text evidence="1">Metabolic intermediate biosynthesis; chorismate biosynthesis; chorismate from D-erythrose 4-phosphate and phosphoenolpyruvate: step 7/7.</text>
</comment>
<comment type="subunit">
    <text evidence="1">Homotetramer.</text>
</comment>
<comment type="similarity">
    <text evidence="1">Belongs to the chorismate synthase family.</text>
</comment>
<accession>Q83HU6</accession>
<reference key="1">
    <citation type="journal article" date="2003" name="Lancet">
        <title>Sequencing and analysis of the genome of the Whipple's disease bacterium Tropheryma whipplei.</title>
        <authorList>
            <person name="Bentley S.D."/>
            <person name="Maiwald M."/>
            <person name="Murphy L.D."/>
            <person name="Pallen M.J."/>
            <person name="Yeats C.A."/>
            <person name="Dover L.G."/>
            <person name="Norbertczak H.T."/>
            <person name="Besra G.S."/>
            <person name="Quail M.A."/>
            <person name="Harris D.E."/>
            <person name="von Herbay A."/>
            <person name="Goble A."/>
            <person name="Rutter S."/>
            <person name="Squares R."/>
            <person name="Squares S."/>
            <person name="Barrell B.G."/>
            <person name="Parkhill J."/>
            <person name="Relman D.A."/>
        </authorList>
    </citation>
    <scope>NUCLEOTIDE SEQUENCE [LARGE SCALE GENOMIC DNA]</scope>
    <source>
        <strain>TW08/27</strain>
    </source>
</reference>
<dbReference type="EC" id="4.2.3.5" evidence="1"/>
<dbReference type="EMBL" id="BX251411">
    <property type="protein sequence ID" value="CAD67068.1"/>
    <property type="molecule type" value="Genomic_DNA"/>
</dbReference>
<dbReference type="RefSeq" id="WP_011096348.1">
    <property type="nucleotide sequence ID" value="NC_004551.1"/>
</dbReference>
<dbReference type="SMR" id="Q83HU6"/>
<dbReference type="GeneID" id="67388176"/>
<dbReference type="KEGG" id="tws:TW397"/>
<dbReference type="HOGENOM" id="CLU_034547_2_0_11"/>
<dbReference type="UniPathway" id="UPA00053">
    <property type="reaction ID" value="UER00090"/>
</dbReference>
<dbReference type="GO" id="GO:0005829">
    <property type="term" value="C:cytosol"/>
    <property type="evidence" value="ECO:0007669"/>
    <property type="project" value="TreeGrafter"/>
</dbReference>
<dbReference type="GO" id="GO:0004107">
    <property type="term" value="F:chorismate synthase activity"/>
    <property type="evidence" value="ECO:0007669"/>
    <property type="project" value="UniProtKB-UniRule"/>
</dbReference>
<dbReference type="GO" id="GO:0010181">
    <property type="term" value="F:FMN binding"/>
    <property type="evidence" value="ECO:0007669"/>
    <property type="project" value="TreeGrafter"/>
</dbReference>
<dbReference type="GO" id="GO:0008652">
    <property type="term" value="P:amino acid biosynthetic process"/>
    <property type="evidence" value="ECO:0007669"/>
    <property type="project" value="UniProtKB-KW"/>
</dbReference>
<dbReference type="GO" id="GO:0009073">
    <property type="term" value="P:aromatic amino acid family biosynthetic process"/>
    <property type="evidence" value="ECO:0007669"/>
    <property type="project" value="UniProtKB-KW"/>
</dbReference>
<dbReference type="GO" id="GO:0009423">
    <property type="term" value="P:chorismate biosynthetic process"/>
    <property type="evidence" value="ECO:0007669"/>
    <property type="project" value="UniProtKB-UniRule"/>
</dbReference>
<dbReference type="CDD" id="cd07304">
    <property type="entry name" value="Chorismate_synthase"/>
    <property type="match status" value="1"/>
</dbReference>
<dbReference type="FunFam" id="3.60.150.10:FF:000002">
    <property type="entry name" value="Chorismate synthase"/>
    <property type="match status" value="1"/>
</dbReference>
<dbReference type="Gene3D" id="3.60.150.10">
    <property type="entry name" value="Chorismate synthase AroC"/>
    <property type="match status" value="1"/>
</dbReference>
<dbReference type="HAMAP" id="MF_00300">
    <property type="entry name" value="Chorismate_synth"/>
    <property type="match status" value="1"/>
</dbReference>
<dbReference type="InterPro" id="IPR000453">
    <property type="entry name" value="Chorismate_synth"/>
</dbReference>
<dbReference type="InterPro" id="IPR035904">
    <property type="entry name" value="Chorismate_synth_AroC_sf"/>
</dbReference>
<dbReference type="InterPro" id="IPR020541">
    <property type="entry name" value="Chorismate_synthase_CS"/>
</dbReference>
<dbReference type="NCBIfam" id="TIGR00033">
    <property type="entry name" value="aroC"/>
    <property type="match status" value="1"/>
</dbReference>
<dbReference type="NCBIfam" id="NF003793">
    <property type="entry name" value="PRK05382.1"/>
    <property type="match status" value="1"/>
</dbReference>
<dbReference type="PANTHER" id="PTHR21085">
    <property type="entry name" value="CHORISMATE SYNTHASE"/>
    <property type="match status" value="1"/>
</dbReference>
<dbReference type="PANTHER" id="PTHR21085:SF0">
    <property type="entry name" value="CHORISMATE SYNTHASE"/>
    <property type="match status" value="1"/>
</dbReference>
<dbReference type="Pfam" id="PF01264">
    <property type="entry name" value="Chorismate_synt"/>
    <property type="match status" value="1"/>
</dbReference>
<dbReference type="PIRSF" id="PIRSF001456">
    <property type="entry name" value="Chorismate_synth"/>
    <property type="match status" value="1"/>
</dbReference>
<dbReference type="SUPFAM" id="SSF103263">
    <property type="entry name" value="Chorismate synthase, AroC"/>
    <property type="match status" value="1"/>
</dbReference>
<dbReference type="PROSITE" id="PS00787">
    <property type="entry name" value="CHORISMATE_SYNTHASE_1"/>
    <property type="match status" value="1"/>
</dbReference>
<dbReference type="PROSITE" id="PS00788">
    <property type="entry name" value="CHORISMATE_SYNTHASE_2"/>
    <property type="match status" value="1"/>
</dbReference>
<feature type="chain" id="PRO_0000322428" description="Chorismate synthase">
    <location>
        <begin position="1"/>
        <end position="400"/>
    </location>
</feature>
<feature type="binding site" evidence="1">
    <location>
        <position position="40"/>
    </location>
    <ligand>
        <name>NADP(+)</name>
        <dbReference type="ChEBI" id="CHEBI:58349"/>
    </ligand>
</feature>
<feature type="binding site" evidence="1">
    <location>
        <position position="46"/>
    </location>
    <ligand>
        <name>NADP(+)</name>
        <dbReference type="ChEBI" id="CHEBI:58349"/>
    </ligand>
</feature>
<feature type="binding site" evidence="1">
    <location>
        <begin position="135"/>
        <end position="137"/>
    </location>
    <ligand>
        <name>FMN</name>
        <dbReference type="ChEBI" id="CHEBI:58210"/>
    </ligand>
</feature>
<feature type="binding site" evidence="1">
    <location>
        <begin position="257"/>
        <end position="258"/>
    </location>
    <ligand>
        <name>FMN</name>
        <dbReference type="ChEBI" id="CHEBI:58210"/>
    </ligand>
</feature>
<feature type="binding site" evidence="1">
    <location>
        <position position="301"/>
    </location>
    <ligand>
        <name>FMN</name>
        <dbReference type="ChEBI" id="CHEBI:58210"/>
    </ligand>
</feature>
<feature type="binding site" evidence="1">
    <location>
        <begin position="316"/>
        <end position="320"/>
    </location>
    <ligand>
        <name>FMN</name>
        <dbReference type="ChEBI" id="CHEBI:58210"/>
    </ligand>
</feature>
<feature type="binding site" evidence="1">
    <location>
        <position position="342"/>
    </location>
    <ligand>
        <name>FMN</name>
        <dbReference type="ChEBI" id="CHEBI:58210"/>
    </ligand>
</feature>
<sequence length="400" mass="43174">MLRWFTAGESHGMELVAILEGLPAGIPVSLEHIGNELSRRRLGFGRSARQKFEKDLVTLSAGVLHGSTLGSPVAIRITNSEWGKWEKIMTPEVPCKSDMSDAKRAQGLYKPRPGHADLVGMQKYGFQNSRLVLERASARETAARVACGAVAKAFLQQLDIFILSHVKQIGSIKIDYEQGAYPRFCDLEAIDSSPVRCFDKNTSEKMKDELHRIKRCGDTLGGVFEVLAYGLPPGLGSYVHWDRRLDAMLSAAIMSIQAVKAVEIGDGLAISALPGSEAHDQIVLESGLLTRMSNHSGGVEGGVTTGSALRISGSMKPISTVPRALKTVDISTRQPANADHQRSDICAVPAAAVVGESMVALTISCAILDKFGGDSLCEIKRNFSGYLNSIPKNLMSVIER</sequence>
<name>AROC_TROW8</name>
<proteinExistence type="inferred from homology"/>
<evidence type="ECO:0000255" key="1">
    <source>
        <dbReference type="HAMAP-Rule" id="MF_00300"/>
    </source>
</evidence>
<organism>
    <name type="scientific">Tropheryma whipplei (strain TW08/27)</name>
    <name type="common">Whipple's bacillus</name>
    <dbReference type="NCBI Taxonomy" id="218496"/>
    <lineage>
        <taxon>Bacteria</taxon>
        <taxon>Bacillati</taxon>
        <taxon>Actinomycetota</taxon>
        <taxon>Actinomycetes</taxon>
        <taxon>Micrococcales</taxon>
        <taxon>Tropherymataceae</taxon>
        <taxon>Tropheryma</taxon>
    </lineage>
</organism>
<gene>
    <name evidence="1" type="primary">aroC</name>
    <name type="ordered locus">TW397</name>
</gene>
<protein>
    <recommendedName>
        <fullName evidence="1">Chorismate synthase</fullName>
        <shortName evidence="1">CS</shortName>
        <ecNumber evidence="1">4.2.3.5</ecNumber>
    </recommendedName>
    <alternativeName>
        <fullName evidence="1">5-enolpyruvylshikimate-3-phosphate phospholyase</fullName>
    </alternativeName>
</protein>
<keyword id="KW-0028">Amino-acid biosynthesis</keyword>
<keyword id="KW-0057">Aromatic amino acid biosynthesis</keyword>
<keyword id="KW-0274">FAD</keyword>
<keyword id="KW-0285">Flavoprotein</keyword>
<keyword id="KW-0288">FMN</keyword>
<keyword id="KW-0456">Lyase</keyword>
<keyword id="KW-0521">NADP</keyword>